<reference key="1">
    <citation type="submission" date="2008-02" db="EMBL/GenBank/DDBJ databases">
        <title>Complete sequence of Yersinia pseudotuberculosis YPIII.</title>
        <authorList>
            <consortium name="US DOE Joint Genome Institute"/>
            <person name="Copeland A."/>
            <person name="Lucas S."/>
            <person name="Lapidus A."/>
            <person name="Glavina del Rio T."/>
            <person name="Dalin E."/>
            <person name="Tice H."/>
            <person name="Bruce D."/>
            <person name="Goodwin L."/>
            <person name="Pitluck S."/>
            <person name="Munk A.C."/>
            <person name="Brettin T."/>
            <person name="Detter J.C."/>
            <person name="Han C."/>
            <person name="Tapia R."/>
            <person name="Schmutz J."/>
            <person name="Larimer F."/>
            <person name="Land M."/>
            <person name="Hauser L."/>
            <person name="Challacombe J.F."/>
            <person name="Green L."/>
            <person name="Lindler L.E."/>
            <person name="Nikolich M.P."/>
            <person name="Richardson P."/>
        </authorList>
    </citation>
    <scope>NUCLEOTIDE SEQUENCE [LARGE SCALE GENOMIC DNA]</scope>
    <source>
        <strain>YPIII</strain>
    </source>
</reference>
<comment type="function">
    <text evidence="1">Catalyzes the reversible isomerization-deamination of glucosamine 6-phosphate (GlcN6P) to form fructose 6-phosphate (Fru6P) and ammonium ion.</text>
</comment>
<comment type="catalytic activity">
    <reaction evidence="1">
        <text>alpha-D-glucosamine 6-phosphate + H2O = beta-D-fructose 6-phosphate + NH4(+)</text>
        <dbReference type="Rhea" id="RHEA:12172"/>
        <dbReference type="ChEBI" id="CHEBI:15377"/>
        <dbReference type="ChEBI" id="CHEBI:28938"/>
        <dbReference type="ChEBI" id="CHEBI:57634"/>
        <dbReference type="ChEBI" id="CHEBI:75989"/>
        <dbReference type="EC" id="3.5.99.6"/>
    </reaction>
</comment>
<comment type="activity regulation">
    <text evidence="1">Allosterically activated by N-acetylglucosamine 6-phosphate (GlcNAc6P).</text>
</comment>
<comment type="pathway">
    <text evidence="1">Amino-sugar metabolism; N-acetylneuraminate degradation; D-fructose 6-phosphate from N-acetylneuraminate: step 5/5.</text>
</comment>
<comment type="subunit">
    <text evidence="1">Homohexamer.</text>
</comment>
<comment type="similarity">
    <text evidence="1">Belongs to the glucosamine/galactosamine-6-phosphate isomerase family. NagB subfamily.</text>
</comment>
<name>NAGB_YERPY</name>
<organism>
    <name type="scientific">Yersinia pseudotuberculosis serotype O:3 (strain YPIII)</name>
    <dbReference type="NCBI Taxonomy" id="502800"/>
    <lineage>
        <taxon>Bacteria</taxon>
        <taxon>Pseudomonadati</taxon>
        <taxon>Pseudomonadota</taxon>
        <taxon>Gammaproteobacteria</taxon>
        <taxon>Enterobacterales</taxon>
        <taxon>Yersiniaceae</taxon>
        <taxon>Yersinia</taxon>
    </lineage>
</organism>
<proteinExistence type="inferred from homology"/>
<feature type="chain" id="PRO_1000139803" description="Glucosamine-6-phosphate deaminase">
    <location>
        <begin position="1"/>
        <end position="266"/>
    </location>
</feature>
<feature type="active site" description="Proton acceptor; for enolization step" evidence="1">
    <location>
        <position position="72"/>
    </location>
</feature>
<feature type="active site" description="For ring-opening step" evidence="1">
    <location>
        <position position="141"/>
    </location>
</feature>
<feature type="active site" description="Proton acceptor; for ring-opening step" evidence="1">
    <location>
        <position position="143"/>
    </location>
</feature>
<feature type="active site" description="For ring-opening step" evidence="1">
    <location>
        <position position="148"/>
    </location>
</feature>
<feature type="site" description="Part of the allosteric site" evidence="1">
    <location>
        <position position="151"/>
    </location>
</feature>
<feature type="site" description="Part of the allosteric site" evidence="1">
    <location>
        <position position="158"/>
    </location>
</feature>
<feature type="site" description="Part of the allosteric site" evidence="1">
    <location>
        <position position="160"/>
    </location>
</feature>
<feature type="site" description="Part of the allosteric site" evidence="1">
    <location>
        <position position="161"/>
    </location>
</feature>
<feature type="site" description="Part of the allosteric site" evidence="1">
    <location>
        <position position="254"/>
    </location>
</feature>
<evidence type="ECO:0000255" key="1">
    <source>
        <dbReference type="HAMAP-Rule" id="MF_01241"/>
    </source>
</evidence>
<dbReference type="EC" id="3.5.99.6" evidence="1"/>
<dbReference type="EMBL" id="CP000950">
    <property type="protein sequence ID" value="ACA69271.1"/>
    <property type="molecule type" value="Genomic_DNA"/>
</dbReference>
<dbReference type="RefSeq" id="WP_002210352.1">
    <property type="nucleotide sequence ID" value="NZ_CP009792.1"/>
</dbReference>
<dbReference type="SMR" id="B1JG88"/>
<dbReference type="GeneID" id="57976064"/>
<dbReference type="KEGG" id="ypy:YPK_2997"/>
<dbReference type="PATRIC" id="fig|502800.11.peg.3719"/>
<dbReference type="UniPathway" id="UPA00629">
    <property type="reaction ID" value="UER00684"/>
</dbReference>
<dbReference type="GO" id="GO:0005737">
    <property type="term" value="C:cytoplasm"/>
    <property type="evidence" value="ECO:0007669"/>
    <property type="project" value="TreeGrafter"/>
</dbReference>
<dbReference type="GO" id="GO:0004342">
    <property type="term" value="F:glucosamine-6-phosphate deaminase activity"/>
    <property type="evidence" value="ECO:0007669"/>
    <property type="project" value="UniProtKB-UniRule"/>
</dbReference>
<dbReference type="GO" id="GO:0042802">
    <property type="term" value="F:identical protein binding"/>
    <property type="evidence" value="ECO:0007669"/>
    <property type="project" value="TreeGrafter"/>
</dbReference>
<dbReference type="GO" id="GO:0005975">
    <property type="term" value="P:carbohydrate metabolic process"/>
    <property type="evidence" value="ECO:0007669"/>
    <property type="project" value="InterPro"/>
</dbReference>
<dbReference type="GO" id="GO:0006043">
    <property type="term" value="P:glucosamine catabolic process"/>
    <property type="evidence" value="ECO:0007669"/>
    <property type="project" value="TreeGrafter"/>
</dbReference>
<dbReference type="GO" id="GO:0006046">
    <property type="term" value="P:N-acetylglucosamine catabolic process"/>
    <property type="evidence" value="ECO:0007669"/>
    <property type="project" value="TreeGrafter"/>
</dbReference>
<dbReference type="GO" id="GO:0019262">
    <property type="term" value="P:N-acetylneuraminate catabolic process"/>
    <property type="evidence" value="ECO:0007669"/>
    <property type="project" value="UniProtKB-UniRule"/>
</dbReference>
<dbReference type="CDD" id="cd01399">
    <property type="entry name" value="GlcN6P_deaminase"/>
    <property type="match status" value="1"/>
</dbReference>
<dbReference type="FunFam" id="3.40.50.1360:FF:000002">
    <property type="entry name" value="Glucosamine-6-phosphate deaminase"/>
    <property type="match status" value="1"/>
</dbReference>
<dbReference type="Gene3D" id="3.40.50.1360">
    <property type="match status" value="1"/>
</dbReference>
<dbReference type="HAMAP" id="MF_01241">
    <property type="entry name" value="GlcN6P_deamin"/>
    <property type="match status" value="1"/>
</dbReference>
<dbReference type="InterPro" id="IPR006148">
    <property type="entry name" value="Glc/Gal-6P_isomerase"/>
</dbReference>
<dbReference type="InterPro" id="IPR004547">
    <property type="entry name" value="Glucosamine6P_isomerase"/>
</dbReference>
<dbReference type="InterPro" id="IPR018321">
    <property type="entry name" value="Glucosamine6P_isomerase_CS"/>
</dbReference>
<dbReference type="InterPro" id="IPR037171">
    <property type="entry name" value="NagB/RpiA_transferase-like"/>
</dbReference>
<dbReference type="NCBIfam" id="TIGR00502">
    <property type="entry name" value="nagB"/>
    <property type="match status" value="1"/>
</dbReference>
<dbReference type="NCBIfam" id="NF001685">
    <property type="entry name" value="PRK00443.1-5"/>
    <property type="match status" value="1"/>
</dbReference>
<dbReference type="PANTHER" id="PTHR11280">
    <property type="entry name" value="GLUCOSAMINE-6-PHOSPHATE ISOMERASE"/>
    <property type="match status" value="1"/>
</dbReference>
<dbReference type="PANTHER" id="PTHR11280:SF5">
    <property type="entry name" value="GLUCOSAMINE-6-PHOSPHATE ISOMERASE"/>
    <property type="match status" value="1"/>
</dbReference>
<dbReference type="Pfam" id="PF01182">
    <property type="entry name" value="Glucosamine_iso"/>
    <property type="match status" value="1"/>
</dbReference>
<dbReference type="SUPFAM" id="SSF100950">
    <property type="entry name" value="NagB/RpiA/CoA transferase-like"/>
    <property type="match status" value="1"/>
</dbReference>
<dbReference type="PROSITE" id="PS01161">
    <property type="entry name" value="GLC_GALNAC_ISOMERASE"/>
    <property type="match status" value="1"/>
</dbReference>
<accession>B1JG88</accession>
<gene>
    <name evidence="1" type="primary">nagB</name>
    <name type="ordered locus">YPK_2997</name>
</gene>
<protein>
    <recommendedName>
        <fullName evidence="1">Glucosamine-6-phosphate deaminase</fullName>
        <ecNumber evidence="1">3.5.99.6</ecNumber>
    </recommendedName>
    <alternativeName>
        <fullName evidence="1">GlcN6P deaminase</fullName>
        <shortName evidence="1">GNPDA</shortName>
    </alternativeName>
    <alternativeName>
        <fullName evidence="1">Glucosamine-6-phosphate isomerase</fullName>
    </alternativeName>
</protein>
<sequence length="266" mass="29667">MRLIPLRNTAEVGKWAARHIVNRINAFKPTAERPFILGLPTGGTPMEAYKYLIAMHKAGEVSFKHVVTFNMDEYVGLPKEHPESYYTFMHTNFFDHVDIPAENINLLNGNAADIDAECRRYEEKIKSYGKIHLFMGGVGVDGHIAFNEPASSLASRTRIKTLTQETRIANSRFFGGDANLVPKYALTVGVGTLLDAEEVMILVTGHGKAQALQAAVEGSINHMWTISCLQLHAKAIMVCDEPSTMELKVKTVKYFRELEAENVKDL</sequence>
<keyword id="KW-0021">Allosteric enzyme</keyword>
<keyword id="KW-0119">Carbohydrate metabolism</keyword>
<keyword id="KW-0378">Hydrolase</keyword>